<comment type="function">
    <text evidence="3">The phosphoenolpyruvate-dependent sugar phosphotransferase system (sugar PTS), a major carbohydrate active transport system, catalyzes the phosphorylation of incoming sugar substrates concomitantly with their translocation across the cell membrane. The enzyme II CmtAB PTS system is involved in D-mannitol transport.</text>
</comment>
<comment type="subunit">
    <text evidence="6">Homodimer or homotrimer. Seems to be a monomer when not phosphorylated.</text>
</comment>
<comment type="subcellular location">
    <subcellularLocation>
        <location evidence="5">Cytoplasm</location>
    </subcellularLocation>
</comment>
<comment type="domain">
    <text evidence="2">The PTS EIIA type-2 domain is phosphorylated by phospho-HPr on a histidyl residue. Then, it transfers the phosphoryl group to the PTS EIIB type-2 domain.</text>
</comment>
<sequence>MSELFSNDNIFLNVNVNSQNEAIEKAGKALVDSGAVTDAYIQVVSTFMGNGLAIPHGTDD</sequence>
<feature type="initiator methionine" description="Removed" evidence="3">
    <location>
        <position position="1"/>
    </location>
</feature>
<feature type="chain" id="PRO_0000186642" description="Mannitol-specific phosphotransferase enzyme IIA component">
    <location>
        <begin position="2"/>
        <end position="60" status="greater than"/>
    </location>
</feature>
<feature type="domain" description="PTS EIIA type-2" evidence="2">
    <location>
        <begin position="2"/>
        <end position="60" status="greater than"/>
    </location>
</feature>
<feature type="active site" description="Tele-phosphohistidine intermediate" evidence="6">
    <location>
        <position position="56"/>
    </location>
</feature>
<feature type="modified residue" description="Phosphohistidine; by HPr" evidence="1 6">
    <location>
        <position position="56"/>
    </location>
</feature>
<feature type="non-consecutive residues" evidence="5">
    <location>
        <begin position="42"/>
        <end position="43"/>
    </location>
</feature>
<feature type="non-terminal residue">
    <location>
        <position position="60"/>
    </location>
</feature>
<organism>
    <name type="scientific">Staphylococcus aureus</name>
    <dbReference type="NCBI Taxonomy" id="1280"/>
    <lineage>
        <taxon>Bacteria</taxon>
        <taxon>Bacillati</taxon>
        <taxon>Bacillota</taxon>
        <taxon>Bacilli</taxon>
        <taxon>Bacillales</taxon>
        <taxon>Staphylococcaceae</taxon>
        <taxon>Staphylococcus</taxon>
    </lineage>
</organism>
<dbReference type="PIR" id="A31048">
    <property type="entry name" value="A31048"/>
</dbReference>
<dbReference type="SMR" id="P0A0E0"/>
<dbReference type="iPTMnet" id="P0A0E0"/>
<dbReference type="GO" id="GO:0005737">
    <property type="term" value="C:cytoplasm"/>
    <property type="evidence" value="ECO:0007669"/>
    <property type="project" value="UniProtKB-SubCell"/>
</dbReference>
<dbReference type="GO" id="GO:0005886">
    <property type="term" value="C:plasma membrane"/>
    <property type="evidence" value="ECO:0007669"/>
    <property type="project" value="TreeGrafter"/>
</dbReference>
<dbReference type="GO" id="GO:0016301">
    <property type="term" value="F:kinase activity"/>
    <property type="evidence" value="ECO:0007669"/>
    <property type="project" value="UniProtKB-KW"/>
</dbReference>
<dbReference type="GO" id="GO:0090563">
    <property type="term" value="F:protein-phosphocysteine-sugar phosphotransferase activity"/>
    <property type="evidence" value="ECO:0007669"/>
    <property type="project" value="TreeGrafter"/>
</dbReference>
<dbReference type="GO" id="GO:0009401">
    <property type="term" value="P:phosphoenolpyruvate-dependent sugar phosphotransferase system"/>
    <property type="evidence" value="ECO:0007669"/>
    <property type="project" value="UniProtKB-KW"/>
</dbReference>
<dbReference type="Gene3D" id="3.40.930.10">
    <property type="entry name" value="Mannitol-specific EII, Chain A"/>
    <property type="match status" value="1"/>
</dbReference>
<dbReference type="InterPro" id="IPR016152">
    <property type="entry name" value="PTrfase/Anion_transptr"/>
</dbReference>
<dbReference type="InterPro" id="IPR002178">
    <property type="entry name" value="PTS_EIIA_type-2_dom"/>
</dbReference>
<dbReference type="InterPro" id="IPR050893">
    <property type="entry name" value="Sugar_PTS"/>
</dbReference>
<dbReference type="PANTHER" id="PTHR30181">
    <property type="entry name" value="MANNITOL PERMEASE IIC COMPONENT"/>
    <property type="match status" value="1"/>
</dbReference>
<dbReference type="PANTHER" id="PTHR30181:SF2">
    <property type="entry name" value="PTS SYSTEM MANNITOL-SPECIFIC EIICBA COMPONENT"/>
    <property type="match status" value="1"/>
</dbReference>
<dbReference type="Pfam" id="PF00359">
    <property type="entry name" value="PTS_EIIA_2"/>
    <property type="match status" value="1"/>
</dbReference>
<dbReference type="SUPFAM" id="SSF55804">
    <property type="entry name" value="Phoshotransferase/anion transport protein"/>
    <property type="match status" value="1"/>
</dbReference>
<protein>
    <recommendedName>
        <fullName evidence="4">Mannitol-specific phosphotransferase enzyme IIA component</fullName>
    </recommendedName>
    <alternativeName>
        <fullName evidence="4">EIIA</fullName>
    </alternativeName>
    <alternativeName>
        <fullName evidence="4">EIII</fullName>
    </alternativeName>
    <alternativeName>
        <fullName evidence="4">PTS system mannitol-specific EIIA component</fullName>
    </alternativeName>
</protein>
<evidence type="ECO:0000250" key="1">
    <source>
        <dbReference type="UniProtKB" id="P00550"/>
    </source>
</evidence>
<evidence type="ECO:0000255" key="2">
    <source>
        <dbReference type="PROSITE-ProRule" id="PRU00417"/>
    </source>
</evidence>
<evidence type="ECO:0000269" key="3">
    <source>
    </source>
</evidence>
<evidence type="ECO:0000303" key="4">
    <source>
    </source>
</evidence>
<evidence type="ECO:0000305" key="5"/>
<evidence type="ECO:0000305" key="6">
    <source>
    </source>
</evidence>
<proteinExistence type="evidence at protein level"/>
<gene>
    <name evidence="4" type="primary">mtlF</name>
    <name type="synonym">mtlA</name>
</gene>
<accession>P0A0E0</accession>
<accession>P17875</accession>
<accession>Q9RL67</accession>
<keyword id="KW-0963">Cytoplasm</keyword>
<keyword id="KW-0903">Direct protein sequencing</keyword>
<keyword id="KW-0418">Kinase</keyword>
<keyword id="KW-0597">Phosphoprotein</keyword>
<keyword id="KW-0598">Phosphotransferase system</keyword>
<keyword id="KW-0762">Sugar transport</keyword>
<keyword id="KW-0808">Transferase</keyword>
<keyword id="KW-0813">Transport</keyword>
<name>PTMA_STAAU</name>
<reference key="1">
    <citation type="journal article" date="1988" name="Biochemistry">
        <title>Staphylococcal phosphoenolpyruvate-dependent phosphotransferase system: purification and characterization of the mannitol-specific enzyme IIImtl of Staphylococcus aureus and Staphylococcus carnosus and homology with the enzyme IImtl of Escherichia coli.</title>
        <authorList>
            <person name="Reiche B."/>
            <person name="Frank R."/>
            <person name="Deutscher J."/>
            <person name="Meyer N."/>
            <person name="Hengstenberg W."/>
        </authorList>
    </citation>
    <scope>PROTEIN SEQUENCE OF 2-60</scope>
    <scope>FUNCTION</scope>
    <scope>ACTIVE SITE</scope>
    <scope>PHOSPHORYLATION AT HIS-56</scope>
    <scope>SUBUNIT</scope>
    <source>
        <strain>5601</strain>
    </source>
</reference>